<organism>
    <name type="scientific">Staphylococcus epidermidis (strain ATCC 35984 / DSM 28319 / BCRC 17069 / CCUG 31568 / BM 3577 / RP62A)</name>
    <dbReference type="NCBI Taxonomy" id="176279"/>
    <lineage>
        <taxon>Bacteria</taxon>
        <taxon>Bacillati</taxon>
        <taxon>Bacillota</taxon>
        <taxon>Bacilli</taxon>
        <taxon>Bacillales</taxon>
        <taxon>Staphylococcaceae</taxon>
        <taxon>Staphylococcus</taxon>
    </lineage>
</organism>
<proteinExistence type="inferred from homology"/>
<evidence type="ECO:0000255" key="1">
    <source>
        <dbReference type="HAMAP-Rule" id="MF_00066"/>
    </source>
</evidence>
<keyword id="KW-0067">ATP-binding</keyword>
<keyword id="KW-0547">Nucleotide-binding</keyword>
<keyword id="KW-0548">Nucleotidyltransferase</keyword>
<keyword id="KW-1185">Reference proteome</keyword>
<keyword id="KW-0808">Transferase</keyword>
<protein>
    <recommendedName>
        <fullName evidence="1">Sulfate adenylyltransferase</fullName>
        <ecNumber evidence="1">2.7.7.4</ecNumber>
    </recommendedName>
    <alternativeName>
        <fullName evidence="1">ATP-sulfurylase</fullName>
    </alternativeName>
    <alternativeName>
        <fullName evidence="1">Sulfate adenylate transferase</fullName>
        <shortName evidence="1">SAT</shortName>
    </alternativeName>
</protein>
<sequence>MSNNETITNYTIKPHGGELINRVVEGNERERLIEEALKFKPITLNPWGISDLELIGIGGFSPLTGFMNKEDYTKVIEETHLSNGLVWSIPITLPVTESEAEKLEIGDDIALYGEDGQLYGTLKLEEKYTYDKEKEARLVYGTTEEAHPGVKKVYEKGNIYLGGPIKLLNRPKHDAFSNYHLDPSETRQLFHDLGWKTVVGFQTRNPVHRAHEYIQKSALEIVDGLLLNPLVGETKSDDIPADVRMESYEVILKNYYPEDRARLVIYPAAMRYAGPREAILHATVRKNYGCTHFIVGRDHAGVGDYYGTYEAQELITQFEDELGIQILKFEHAFYCEACGNMATAKTCPHDASQHLHLSGTKVREKLRNGESLPTKFSRPEVAEVLIKGLREK</sequence>
<feature type="chain" id="PRO_0000105943" description="Sulfate adenylyltransferase">
    <location>
        <begin position="1"/>
        <end position="392"/>
    </location>
</feature>
<reference key="1">
    <citation type="journal article" date="2005" name="J. Bacteriol.">
        <title>Insights on evolution of virulence and resistance from the complete genome analysis of an early methicillin-resistant Staphylococcus aureus strain and a biofilm-producing methicillin-resistant Staphylococcus epidermidis strain.</title>
        <authorList>
            <person name="Gill S.R."/>
            <person name="Fouts D.E."/>
            <person name="Archer G.L."/>
            <person name="Mongodin E.F."/>
            <person name="DeBoy R.T."/>
            <person name="Ravel J."/>
            <person name="Paulsen I.T."/>
            <person name="Kolonay J.F."/>
            <person name="Brinkac L.M."/>
            <person name="Beanan M.J."/>
            <person name="Dodson R.J."/>
            <person name="Daugherty S.C."/>
            <person name="Madupu R."/>
            <person name="Angiuoli S.V."/>
            <person name="Durkin A.S."/>
            <person name="Haft D.H."/>
            <person name="Vamathevan J.J."/>
            <person name="Khouri H."/>
            <person name="Utterback T.R."/>
            <person name="Lee C."/>
            <person name="Dimitrov G."/>
            <person name="Jiang L."/>
            <person name="Qin H."/>
            <person name="Weidman J."/>
            <person name="Tran K."/>
            <person name="Kang K.H."/>
            <person name="Hance I.R."/>
            <person name="Nelson K.E."/>
            <person name="Fraser C.M."/>
        </authorList>
    </citation>
    <scope>NUCLEOTIDE SEQUENCE [LARGE SCALE GENOMIC DNA]</scope>
    <source>
        <strain>ATCC 35984 / DSM 28319 / BCRC 17069 / CCUG 31568 / BM 3577 / RP62A</strain>
    </source>
</reference>
<comment type="catalytic activity">
    <reaction evidence="1">
        <text>sulfate + ATP + H(+) = adenosine 5'-phosphosulfate + diphosphate</text>
        <dbReference type="Rhea" id="RHEA:18133"/>
        <dbReference type="ChEBI" id="CHEBI:15378"/>
        <dbReference type="ChEBI" id="CHEBI:16189"/>
        <dbReference type="ChEBI" id="CHEBI:30616"/>
        <dbReference type="ChEBI" id="CHEBI:33019"/>
        <dbReference type="ChEBI" id="CHEBI:58243"/>
        <dbReference type="EC" id="2.7.7.4"/>
    </reaction>
</comment>
<comment type="pathway">
    <text evidence="1">Sulfur metabolism; hydrogen sulfide biosynthesis; sulfite from sulfate: step 1/3.</text>
</comment>
<comment type="similarity">
    <text evidence="1">Belongs to the sulfate adenylyltransferase family.</text>
</comment>
<accession>Q5HL01</accession>
<dbReference type="EC" id="2.7.7.4" evidence="1"/>
<dbReference type="EMBL" id="CP000029">
    <property type="protein sequence ID" value="AAW52997.1"/>
    <property type="molecule type" value="Genomic_DNA"/>
</dbReference>
<dbReference type="RefSeq" id="WP_010959302.1">
    <property type="nucleotide sequence ID" value="NC_002976.3"/>
</dbReference>
<dbReference type="SMR" id="Q5HL01"/>
<dbReference type="STRING" id="176279.SERP2186"/>
<dbReference type="KEGG" id="ser:SERP2186"/>
<dbReference type="eggNOG" id="COG2046">
    <property type="taxonomic scope" value="Bacteria"/>
</dbReference>
<dbReference type="HOGENOM" id="CLU_022950_1_1_9"/>
<dbReference type="UniPathway" id="UPA00140">
    <property type="reaction ID" value="UER00204"/>
</dbReference>
<dbReference type="Proteomes" id="UP000000531">
    <property type="component" value="Chromosome"/>
</dbReference>
<dbReference type="GO" id="GO:0005524">
    <property type="term" value="F:ATP binding"/>
    <property type="evidence" value="ECO:0007669"/>
    <property type="project" value="UniProtKB-KW"/>
</dbReference>
<dbReference type="GO" id="GO:0004781">
    <property type="term" value="F:sulfate adenylyltransferase (ATP) activity"/>
    <property type="evidence" value="ECO:0007669"/>
    <property type="project" value="UniProtKB-UniRule"/>
</dbReference>
<dbReference type="GO" id="GO:0070814">
    <property type="term" value="P:hydrogen sulfide biosynthetic process"/>
    <property type="evidence" value="ECO:0007669"/>
    <property type="project" value="UniProtKB-UniRule"/>
</dbReference>
<dbReference type="GO" id="GO:0000103">
    <property type="term" value="P:sulfate assimilation"/>
    <property type="evidence" value="ECO:0007669"/>
    <property type="project" value="UniProtKB-UniRule"/>
</dbReference>
<dbReference type="CDD" id="cd00517">
    <property type="entry name" value="ATPS"/>
    <property type="match status" value="1"/>
</dbReference>
<dbReference type="Gene3D" id="3.40.50.620">
    <property type="entry name" value="HUPs"/>
    <property type="match status" value="1"/>
</dbReference>
<dbReference type="Gene3D" id="3.10.400.10">
    <property type="entry name" value="Sulfate adenylyltransferase"/>
    <property type="match status" value="1"/>
</dbReference>
<dbReference type="HAMAP" id="MF_00066">
    <property type="entry name" value="Sulf_adenylyltr"/>
    <property type="match status" value="1"/>
</dbReference>
<dbReference type="InterPro" id="IPR025980">
    <property type="entry name" value="ATP-Sase_PUA-like_dom"/>
</dbReference>
<dbReference type="InterPro" id="IPR015947">
    <property type="entry name" value="PUA-like_sf"/>
</dbReference>
<dbReference type="InterPro" id="IPR014729">
    <property type="entry name" value="Rossmann-like_a/b/a_fold"/>
</dbReference>
<dbReference type="InterPro" id="IPR020792">
    <property type="entry name" value="SO4_adenylyltransferase_pro"/>
</dbReference>
<dbReference type="InterPro" id="IPR024951">
    <property type="entry name" value="Sulfurylase_cat_dom"/>
</dbReference>
<dbReference type="InterPro" id="IPR002650">
    <property type="entry name" value="Sulphate_adenylyltransferase"/>
</dbReference>
<dbReference type="NCBIfam" id="NF003166">
    <property type="entry name" value="PRK04149.1"/>
    <property type="match status" value="1"/>
</dbReference>
<dbReference type="NCBIfam" id="TIGR00339">
    <property type="entry name" value="sopT"/>
    <property type="match status" value="1"/>
</dbReference>
<dbReference type="PANTHER" id="PTHR43509">
    <property type="match status" value="1"/>
</dbReference>
<dbReference type="PANTHER" id="PTHR43509:SF1">
    <property type="entry name" value="SULFATE ADENYLYLTRANSFERASE"/>
    <property type="match status" value="1"/>
</dbReference>
<dbReference type="Pfam" id="PF01747">
    <property type="entry name" value="ATP-sulfurylase"/>
    <property type="match status" value="1"/>
</dbReference>
<dbReference type="Pfam" id="PF14306">
    <property type="entry name" value="PUA_2"/>
    <property type="match status" value="1"/>
</dbReference>
<dbReference type="SUPFAM" id="SSF52374">
    <property type="entry name" value="Nucleotidylyl transferase"/>
    <property type="match status" value="1"/>
</dbReference>
<dbReference type="SUPFAM" id="SSF88697">
    <property type="entry name" value="PUA domain-like"/>
    <property type="match status" value="1"/>
</dbReference>
<name>SAT_STAEQ</name>
<gene>
    <name evidence="1" type="primary">sat</name>
    <name type="ordered locus">SERP2186</name>
</gene>